<proteinExistence type="inferred from homology"/>
<keyword id="KW-0627">Porphyrin biosynthesis</keyword>
<keyword id="KW-1185">Reference proteome</keyword>
<keyword id="KW-0808">Transferase</keyword>
<evidence type="ECO:0000255" key="1">
    <source>
        <dbReference type="HAMAP-Rule" id="MF_00260"/>
    </source>
</evidence>
<dbReference type="EC" id="2.5.1.61" evidence="1"/>
<dbReference type="EMBL" id="AL591688">
    <property type="protein sequence ID" value="CAC47658.1"/>
    <property type="molecule type" value="Genomic_DNA"/>
</dbReference>
<dbReference type="RefSeq" id="NP_387185.1">
    <property type="nucleotide sequence ID" value="NC_003047.1"/>
</dbReference>
<dbReference type="RefSeq" id="WP_010970392.1">
    <property type="nucleotide sequence ID" value="NC_003047.1"/>
</dbReference>
<dbReference type="SMR" id="Q92LH7"/>
<dbReference type="EnsemblBacteria" id="CAC47658">
    <property type="protein sequence ID" value="CAC47658"/>
    <property type="gene ID" value="SMc03231"/>
</dbReference>
<dbReference type="KEGG" id="sme:SMc03231"/>
<dbReference type="PATRIC" id="fig|266834.11.peg.4613"/>
<dbReference type="eggNOG" id="COG0181">
    <property type="taxonomic scope" value="Bacteria"/>
</dbReference>
<dbReference type="HOGENOM" id="CLU_019704_1_2_5"/>
<dbReference type="OrthoDB" id="9810298at2"/>
<dbReference type="UniPathway" id="UPA00251">
    <property type="reaction ID" value="UER00319"/>
</dbReference>
<dbReference type="Proteomes" id="UP000001976">
    <property type="component" value="Chromosome"/>
</dbReference>
<dbReference type="GO" id="GO:0005737">
    <property type="term" value="C:cytoplasm"/>
    <property type="evidence" value="ECO:0007669"/>
    <property type="project" value="TreeGrafter"/>
</dbReference>
<dbReference type="GO" id="GO:0004418">
    <property type="term" value="F:hydroxymethylbilane synthase activity"/>
    <property type="evidence" value="ECO:0007669"/>
    <property type="project" value="UniProtKB-UniRule"/>
</dbReference>
<dbReference type="GO" id="GO:0006782">
    <property type="term" value="P:protoporphyrinogen IX biosynthetic process"/>
    <property type="evidence" value="ECO:0007669"/>
    <property type="project" value="UniProtKB-UniRule"/>
</dbReference>
<dbReference type="FunFam" id="3.40.190.10:FF:000005">
    <property type="entry name" value="Porphobilinogen deaminase"/>
    <property type="match status" value="1"/>
</dbReference>
<dbReference type="Gene3D" id="3.40.190.10">
    <property type="entry name" value="Periplasmic binding protein-like II"/>
    <property type="match status" value="2"/>
</dbReference>
<dbReference type="Gene3D" id="3.30.160.40">
    <property type="entry name" value="Porphobilinogen deaminase, C-terminal domain"/>
    <property type="match status" value="1"/>
</dbReference>
<dbReference type="HAMAP" id="MF_00260">
    <property type="entry name" value="Porphobil_deam"/>
    <property type="match status" value="1"/>
</dbReference>
<dbReference type="InterPro" id="IPR000860">
    <property type="entry name" value="HemC"/>
</dbReference>
<dbReference type="InterPro" id="IPR022419">
    <property type="entry name" value="Porphobilin_deaminase_cofac_BS"/>
</dbReference>
<dbReference type="InterPro" id="IPR022417">
    <property type="entry name" value="Porphobilin_deaminase_N"/>
</dbReference>
<dbReference type="InterPro" id="IPR022418">
    <property type="entry name" value="Porphobilinogen_deaminase_C"/>
</dbReference>
<dbReference type="InterPro" id="IPR036803">
    <property type="entry name" value="Porphobilinogen_deaminase_C_sf"/>
</dbReference>
<dbReference type="NCBIfam" id="TIGR00212">
    <property type="entry name" value="hemC"/>
    <property type="match status" value="1"/>
</dbReference>
<dbReference type="PANTHER" id="PTHR11557">
    <property type="entry name" value="PORPHOBILINOGEN DEAMINASE"/>
    <property type="match status" value="1"/>
</dbReference>
<dbReference type="PANTHER" id="PTHR11557:SF0">
    <property type="entry name" value="PORPHOBILINOGEN DEAMINASE"/>
    <property type="match status" value="1"/>
</dbReference>
<dbReference type="Pfam" id="PF01379">
    <property type="entry name" value="Porphobil_deam"/>
    <property type="match status" value="1"/>
</dbReference>
<dbReference type="Pfam" id="PF03900">
    <property type="entry name" value="Porphobil_deamC"/>
    <property type="match status" value="1"/>
</dbReference>
<dbReference type="PIRSF" id="PIRSF001438">
    <property type="entry name" value="4pyrrol_synth_OHMeBilane_synth"/>
    <property type="match status" value="1"/>
</dbReference>
<dbReference type="PRINTS" id="PR00151">
    <property type="entry name" value="PORPHBDMNASE"/>
</dbReference>
<dbReference type="SUPFAM" id="SSF53850">
    <property type="entry name" value="Periplasmic binding protein-like II"/>
    <property type="match status" value="1"/>
</dbReference>
<dbReference type="SUPFAM" id="SSF54782">
    <property type="entry name" value="Porphobilinogen deaminase (hydroxymethylbilane synthase), C-terminal domain"/>
    <property type="match status" value="1"/>
</dbReference>
<dbReference type="PROSITE" id="PS00533">
    <property type="entry name" value="PORPHOBILINOGEN_DEAM"/>
    <property type="match status" value="1"/>
</dbReference>
<comment type="function">
    <text evidence="1">Tetrapolymerization of the monopyrrole PBG into the hydroxymethylbilane pre-uroporphyrinogen in several discrete steps.</text>
</comment>
<comment type="catalytic activity">
    <reaction evidence="1">
        <text>4 porphobilinogen + H2O = hydroxymethylbilane + 4 NH4(+)</text>
        <dbReference type="Rhea" id="RHEA:13185"/>
        <dbReference type="ChEBI" id="CHEBI:15377"/>
        <dbReference type="ChEBI" id="CHEBI:28938"/>
        <dbReference type="ChEBI" id="CHEBI:57845"/>
        <dbReference type="ChEBI" id="CHEBI:58126"/>
        <dbReference type="EC" id="2.5.1.61"/>
    </reaction>
</comment>
<comment type="cofactor">
    <cofactor evidence="1">
        <name>dipyrromethane</name>
        <dbReference type="ChEBI" id="CHEBI:60342"/>
    </cofactor>
    <text evidence="1">Binds 1 dipyrromethane group covalently.</text>
</comment>
<comment type="pathway">
    <text evidence="1">Porphyrin-containing compound metabolism; protoporphyrin-IX biosynthesis; coproporphyrinogen-III from 5-aminolevulinate: step 2/4.</text>
</comment>
<comment type="subunit">
    <text evidence="1">Monomer.</text>
</comment>
<comment type="miscellaneous">
    <text evidence="1">The porphobilinogen subunits are added to the dipyrromethane group.</text>
</comment>
<comment type="similarity">
    <text evidence="1">Belongs to the HMBS family.</text>
</comment>
<reference key="1">
    <citation type="journal article" date="2001" name="Proc. Natl. Acad. Sci. U.S.A.">
        <title>Analysis of the chromosome sequence of the legume symbiont Sinorhizobium meliloti strain 1021.</title>
        <authorList>
            <person name="Capela D."/>
            <person name="Barloy-Hubler F."/>
            <person name="Gouzy J."/>
            <person name="Bothe G."/>
            <person name="Ampe F."/>
            <person name="Batut J."/>
            <person name="Boistard P."/>
            <person name="Becker A."/>
            <person name="Boutry M."/>
            <person name="Cadieu E."/>
            <person name="Dreano S."/>
            <person name="Gloux S."/>
            <person name="Godrie T."/>
            <person name="Goffeau A."/>
            <person name="Kahn D."/>
            <person name="Kiss E."/>
            <person name="Lelaure V."/>
            <person name="Masuy D."/>
            <person name="Pohl T."/>
            <person name="Portetelle D."/>
            <person name="Puehler A."/>
            <person name="Purnelle B."/>
            <person name="Ramsperger U."/>
            <person name="Renard C."/>
            <person name="Thebault P."/>
            <person name="Vandenbol M."/>
            <person name="Weidner S."/>
            <person name="Galibert F."/>
        </authorList>
    </citation>
    <scope>NUCLEOTIDE SEQUENCE [LARGE SCALE GENOMIC DNA]</scope>
    <source>
        <strain>1021</strain>
    </source>
</reference>
<reference key="2">
    <citation type="journal article" date="2001" name="Science">
        <title>The composite genome of the legume symbiont Sinorhizobium meliloti.</title>
        <authorList>
            <person name="Galibert F."/>
            <person name="Finan T.M."/>
            <person name="Long S.R."/>
            <person name="Puehler A."/>
            <person name="Abola P."/>
            <person name="Ampe F."/>
            <person name="Barloy-Hubler F."/>
            <person name="Barnett M.J."/>
            <person name="Becker A."/>
            <person name="Boistard P."/>
            <person name="Bothe G."/>
            <person name="Boutry M."/>
            <person name="Bowser L."/>
            <person name="Buhrmester J."/>
            <person name="Cadieu E."/>
            <person name="Capela D."/>
            <person name="Chain P."/>
            <person name="Cowie A."/>
            <person name="Davis R.W."/>
            <person name="Dreano S."/>
            <person name="Federspiel N.A."/>
            <person name="Fisher R.F."/>
            <person name="Gloux S."/>
            <person name="Godrie T."/>
            <person name="Goffeau A."/>
            <person name="Golding B."/>
            <person name="Gouzy J."/>
            <person name="Gurjal M."/>
            <person name="Hernandez-Lucas I."/>
            <person name="Hong A."/>
            <person name="Huizar L."/>
            <person name="Hyman R.W."/>
            <person name="Jones T."/>
            <person name="Kahn D."/>
            <person name="Kahn M.L."/>
            <person name="Kalman S."/>
            <person name="Keating D.H."/>
            <person name="Kiss E."/>
            <person name="Komp C."/>
            <person name="Lelaure V."/>
            <person name="Masuy D."/>
            <person name="Palm C."/>
            <person name="Peck M.C."/>
            <person name="Pohl T.M."/>
            <person name="Portetelle D."/>
            <person name="Purnelle B."/>
            <person name="Ramsperger U."/>
            <person name="Surzycki R."/>
            <person name="Thebault P."/>
            <person name="Vandenbol M."/>
            <person name="Vorhoelter F.J."/>
            <person name="Weidner S."/>
            <person name="Wells D.H."/>
            <person name="Wong K."/>
            <person name="Yeh K.-C."/>
            <person name="Batut J."/>
        </authorList>
    </citation>
    <scope>NUCLEOTIDE SEQUENCE [LARGE SCALE GENOMIC DNA]</scope>
    <source>
        <strain>1021</strain>
    </source>
</reference>
<name>HEM3_RHIME</name>
<accession>Q92LH7</accession>
<gene>
    <name evidence="1" type="primary">hemC</name>
    <name type="ordered locus">R03079</name>
    <name type="ORF">SMc03231</name>
</gene>
<protein>
    <recommendedName>
        <fullName evidence="1">Porphobilinogen deaminase</fullName>
        <shortName evidence="1">PBG</shortName>
        <ecNumber evidence="1">2.5.1.61</ecNumber>
    </recommendedName>
    <alternativeName>
        <fullName evidence="1">Hydroxymethylbilane synthase</fullName>
        <shortName evidence="1">HMBS</shortName>
    </alternativeName>
    <alternativeName>
        <fullName evidence="1">Pre-uroporphyrinogen synthase</fullName>
    </alternativeName>
</protein>
<sequence length="309" mass="33651">MQTKPFRIGTRGSPLAMAQTHETRDRLAAAHGLPPEMFEIVILSTKGDRITDRSLAEIGGKGLFTEELEQQLLSGDLDFAVHSSKDMPTKLPEGLFLSAFLPREDIRDAFVGRSAKRLVDLPQGATVGSSSLRRQALIRRLRPDIDVITYRGQVETRLRKLAEGQVDGTLLAYAGLRRLGMEHVPTELLDPEEFPPAPAQGAICVEARIGDDRINTLLAAIDDPRTHEAVSCERGFLATLDGSCRTPIAGYAQSDGTHIRFAGMILTPDGTTSHQIEIDGRAADAERLGQEAGERIRAKAGPGFFSSWS</sequence>
<organism>
    <name type="scientific">Rhizobium meliloti (strain 1021)</name>
    <name type="common">Ensifer meliloti</name>
    <name type="synonym">Sinorhizobium meliloti</name>
    <dbReference type="NCBI Taxonomy" id="266834"/>
    <lineage>
        <taxon>Bacteria</taxon>
        <taxon>Pseudomonadati</taxon>
        <taxon>Pseudomonadota</taxon>
        <taxon>Alphaproteobacteria</taxon>
        <taxon>Hyphomicrobiales</taxon>
        <taxon>Rhizobiaceae</taxon>
        <taxon>Sinorhizobium/Ensifer group</taxon>
        <taxon>Sinorhizobium</taxon>
    </lineage>
</organism>
<feature type="chain" id="PRO_0000142979" description="Porphobilinogen deaminase">
    <location>
        <begin position="1"/>
        <end position="309"/>
    </location>
</feature>
<feature type="modified residue" description="S-(dipyrrolylmethanemethyl)cysteine" evidence="1">
    <location>
        <position position="244"/>
    </location>
</feature>